<sequence length="198" mass="21285">MSYYAFEGLIPVVHPDAFVHPSAVLIGDVIVGAGVYIGPLASLRGDYGRLILEAGSNLQDGCIMHGYCDTDTIVHENGHIGHGAILHGCVVGRDALVGMNSVIMDGAVIGEESIVAAMSFVKAGFQGEARQLLVGSPARVLRQVTDQELHWKHLNTKEYQDLAIRCRTGLSETKPLTQAEENRPRLKGTTDVKPKSAQ</sequence>
<name>CAIE_SALTY</name>
<protein>
    <recommendedName>
        <fullName evidence="1">Carnitine operon protein CaiE</fullName>
    </recommendedName>
</protein>
<dbReference type="EMBL" id="AE006468">
    <property type="protein sequence ID" value="AAL19033.1"/>
    <property type="molecule type" value="Genomic_DNA"/>
</dbReference>
<dbReference type="RefSeq" id="NP_459074.1">
    <property type="nucleotide sequence ID" value="NC_003197.2"/>
</dbReference>
<dbReference type="RefSeq" id="WP_000122861.1">
    <property type="nucleotide sequence ID" value="NC_003197.2"/>
</dbReference>
<dbReference type="SMR" id="Q8ZRX6"/>
<dbReference type="STRING" id="99287.STM0069"/>
<dbReference type="PaxDb" id="99287-STM0069"/>
<dbReference type="GeneID" id="1251587"/>
<dbReference type="KEGG" id="stm:STM0069"/>
<dbReference type="PATRIC" id="fig|99287.12.peg.71"/>
<dbReference type="HOGENOM" id="CLU_064827_4_2_6"/>
<dbReference type="OMA" id="MPCYRLD"/>
<dbReference type="PhylomeDB" id="Q8ZRX6"/>
<dbReference type="BioCyc" id="SENT99287:STM0069-MONOMER"/>
<dbReference type="UniPathway" id="UPA00117"/>
<dbReference type="Proteomes" id="UP000001014">
    <property type="component" value="Chromosome"/>
</dbReference>
<dbReference type="GO" id="GO:0016740">
    <property type="term" value="F:transferase activity"/>
    <property type="evidence" value="ECO:0007669"/>
    <property type="project" value="UniProtKB-KW"/>
</dbReference>
<dbReference type="GO" id="GO:0009437">
    <property type="term" value="P:carnitine metabolic process"/>
    <property type="evidence" value="ECO:0007669"/>
    <property type="project" value="UniProtKB-UniRule"/>
</dbReference>
<dbReference type="CDD" id="cd04745">
    <property type="entry name" value="LbH_paaY_like"/>
    <property type="match status" value="1"/>
</dbReference>
<dbReference type="FunFam" id="2.160.10.10:FF:000012">
    <property type="entry name" value="Carnitine operon protein CaiE"/>
    <property type="match status" value="1"/>
</dbReference>
<dbReference type="Gene3D" id="2.160.10.10">
    <property type="entry name" value="Hexapeptide repeat proteins"/>
    <property type="match status" value="1"/>
</dbReference>
<dbReference type="HAMAP" id="MF_01525">
    <property type="entry name" value="CaiE"/>
    <property type="match status" value="1"/>
</dbReference>
<dbReference type="InterPro" id="IPR023446">
    <property type="entry name" value="CaiE"/>
</dbReference>
<dbReference type="InterPro" id="IPR001451">
    <property type="entry name" value="Hexapep"/>
</dbReference>
<dbReference type="InterPro" id="IPR050484">
    <property type="entry name" value="Transf_Hexapept/Carb_Anhydrase"/>
</dbReference>
<dbReference type="InterPro" id="IPR011004">
    <property type="entry name" value="Trimer_LpxA-like_sf"/>
</dbReference>
<dbReference type="NCBIfam" id="NF010150">
    <property type="entry name" value="PRK13627.1"/>
    <property type="match status" value="1"/>
</dbReference>
<dbReference type="PANTHER" id="PTHR13061">
    <property type="entry name" value="DYNACTIN SUBUNIT P25"/>
    <property type="match status" value="1"/>
</dbReference>
<dbReference type="PANTHER" id="PTHR13061:SF29">
    <property type="entry name" value="GAMMA CARBONIC ANHYDRASE-LIKE 1, MITOCHONDRIAL-RELATED"/>
    <property type="match status" value="1"/>
</dbReference>
<dbReference type="Pfam" id="PF00132">
    <property type="entry name" value="Hexapep"/>
    <property type="match status" value="2"/>
</dbReference>
<dbReference type="SUPFAM" id="SSF51161">
    <property type="entry name" value="Trimeric LpxA-like enzymes"/>
    <property type="match status" value="1"/>
</dbReference>
<accession>Q8ZRX6</accession>
<keyword id="KW-1185">Reference proteome</keyword>
<keyword id="KW-0677">Repeat</keyword>
<keyword id="KW-0808">Transferase</keyword>
<gene>
    <name evidence="1" type="primary">caiE</name>
    <name type="ordered locus">STM0069</name>
</gene>
<comment type="function">
    <text evidence="1">Overproduction of CaiE stimulates the activity of CaiB and CaiD.</text>
</comment>
<comment type="pathway">
    <text evidence="1">Amine and polyamine metabolism; carnitine metabolism.</text>
</comment>
<comment type="similarity">
    <text evidence="1">Belongs to the transferase hexapeptide repeat family.</text>
</comment>
<organism>
    <name type="scientific">Salmonella typhimurium (strain LT2 / SGSC1412 / ATCC 700720)</name>
    <dbReference type="NCBI Taxonomy" id="99287"/>
    <lineage>
        <taxon>Bacteria</taxon>
        <taxon>Pseudomonadati</taxon>
        <taxon>Pseudomonadota</taxon>
        <taxon>Gammaproteobacteria</taxon>
        <taxon>Enterobacterales</taxon>
        <taxon>Enterobacteriaceae</taxon>
        <taxon>Salmonella</taxon>
    </lineage>
</organism>
<feature type="chain" id="PRO_0000068726" description="Carnitine operon protein CaiE">
    <location>
        <begin position="1"/>
        <end position="198"/>
    </location>
</feature>
<feature type="region of interest" description="Disordered" evidence="2">
    <location>
        <begin position="174"/>
        <end position="198"/>
    </location>
</feature>
<feature type="compositionally biased region" description="Basic and acidic residues" evidence="2">
    <location>
        <begin position="180"/>
        <end position="198"/>
    </location>
</feature>
<reference key="1">
    <citation type="journal article" date="2001" name="Nature">
        <title>Complete genome sequence of Salmonella enterica serovar Typhimurium LT2.</title>
        <authorList>
            <person name="McClelland M."/>
            <person name="Sanderson K.E."/>
            <person name="Spieth J."/>
            <person name="Clifton S.W."/>
            <person name="Latreille P."/>
            <person name="Courtney L."/>
            <person name="Porwollik S."/>
            <person name="Ali J."/>
            <person name="Dante M."/>
            <person name="Du F."/>
            <person name="Hou S."/>
            <person name="Layman D."/>
            <person name="Leonard S."/>
            <person name="Nguyen C."/>
            <person name="Scott K."/>
            <person name="Holmes A."/>
            <person name="Grewal N."/>
            <person name="Mulvaney E."/>
            <person name="Ryan E."/>
            <person name="Sun H."/>
            <person name="Florea L."/>
            <person name="Miller W."/>
            <person name="Stoneking T."/>
            <person name="Nhan M."/>
            <person name="Waterston R."/>
            <person name="Wilson R.K."/>
        </authorList>
    </citation>
    <scope>NUCLEOTIDE SEQUENCE [LARGE SCALE GENOMIC DNA]</scope>
    <source>
        <strain>LT2 / SGSC1412 / ATCC 700720</strain>
    </source>
</reference>
<proteinExistence type="inferred from homology"/>
<evidence type="ECO:0000255" key="1">
    <source>
        <dbReference type="HAMAP-Rule" id="MF_01525"/>
    </source>
</evidence>
<evidence type="ECO:0000256" key="2">
    <source>
        <dbReference type="SAM" id="MobiDB-lite"/>
    </source>
</evidence>